<comment type="function">
    <text evidence="1">Required for insertion of 4Fe-4S clusters.</text>
</comment>
<comment type="cofactor">
    <cofactor evidence="1">
        <name>iron-sulfur cluster</name>
        <dbReference type="ChEBI" id="CHEBI:30408"/>
    </cofactor>
    <text evidence="1">Binds 1 iron-sulfur cluster per subunit.</text>
</comment>
<comment type="subunit">
    <text evidence="1">Homodimer.</text>
</comment>
<comment type="similarity">
    <text evidence="1">Belongs to the HesB/IscA family.</text>
</comment>
<organism>
    <name type="scientific">Burkholderia pseudomallei (strain 1710b)</name>
    <dbReference type="NCBI Taxonomy" id="320372"/>
    <lineage>
        <taxon>Bacteria</taxon>
        <taxon>Pseudomonadati</taxon>
        <taxon>Pseudomonadota</taxon>
        <taxon>Betaproteobacteria</taxon>
        <taxon>Burkholderiales</taxon>
        <taxon>Burkholderiaceae</taxon>
        <taxon>Burkholderia</taxon>
        <taxon>pseudomallei group</taxon>
    </lineage>
</organism>
<evidence type="ECO:0000255" key="1">
    <source>
        <dbReference type="HAMAP-Rule" id="MF_01380"/>
    </source>
</evidence>
<keyword id="KW-0408">Iron</keyword>
<keyword id="KW-0411">Iron-sulfur</keyword>
<keyword id="KW-0479">Metal-binding</keyword>
<dbReference type="EMBL" id="CP000124">
    <property type="protein sequence ID" value="ABA49115.1"/>
    <property type="molecule type" value="Genomic_DNA"/>
</dbReference>
<dbReference type="RefSeq" id="WP_004194247.1">
    <property type="nucleotide sequence ID" value="NC_007434.1"/>
</dbReference>
<dbReference type="SMR" id="Q3JNR3"/>
<dbReference type="EnsemblBacteria" id="ABA49115">
    <property type="protein sequence ID" value="ABA49115"/>
    <property type="gene ID" value="BURPS1710b_3419"/>
</dbReference>
<dbReference type="GeneID" id="93061505"/>
<dbReference type="KEGG" id="bpm:BURPS1710b_3419"/>
<dbReference type="HOGENOM" id="CLU_069054_5_3_4"/>
<dbReference type="Proteomes" id="UP000002700">
    <property type="component" value="Chromosome I"/>
</dbReference>
<dbReference type="GO" id="GO:0051537">
    <property type="term" value="F:2 iron, 2 sulfur cluster binding"/>
    <property type="evidence" value="ECO:0007669"/>
    <property type="project" value="TreeGrafter"/>
</dbReference>
<dbReference type="GO" id="GO:0051539">
    <property type="term" value="F:4 iron, 4 sulfur cluster binding"/>
    <property type="evidence" value="ECO:0007669"/>
    <property type="project" value="TreeGrafter"/>
</dbReference>
<dbReference type="GO" id="GO:0005506">
    <property type="term" value="F:iron ion binding"/>
    <property type="evidence" value="ECO:0007669"/>
    <property type="project" value="UniProtKB-UniRule"/>
</dbReference>
<dbReference type="GO" id="GO:0016226">
    <property type="term" value="P:iron-sulfur cluster assembly"/>
    <property type="evidence" value="ECO:0007669"/>
    <property type="project" value="UniProtKB-UniRule"/>
</dbReference>
<dbReference type="FunFam" id="2.60.300.12:FF:000002">
    <property type="entry name" value="Iron-sulfur cluster insertion protein ErpA"/>
    <property type="match status" value="1"/>
</dbReference>
<dbReference type="Gene3D" id="2.60.300.12">
    <property type="entry name" value="HesB-like domain"/>
    <property type="match status" value="1"/>
</dbReference>
<dbReference type="HAMAP" id="MF_01380">
    <property type="entry name" value="Fe_S_insert_ErpA"/>
    <property type="match status" value="1"/>
</dbReference>
<dbReference type="InterPro" id="IPR000361">
    <property type="entry name" value="FeS_biogenesis"/>
</dbReference>
<dbReference type="InterPro" id="IPR016092">
    <property type="entry name" value="FeS_cluster_insertion"/>
</dbReference>
<dbReference type="InterPro" id="IPR017870">
    <property type="entry name" value="FeS_cluster_insertion_CS"/>
</dbReference>
<dbReference type="InterPro" id="IPR023063">
    <property type="entry name" value="FeS_cluster_insertion_RrpA"/>
</dbReference>
<dbReference type="InterPro" id="IPR035903">
    <property type="entry name" value="HesB-like_dom_sf"/>
</dbReference>
<dbReference type="NCBIfam" id="TIGR00049">
    <property type="entry name" value="iron-sulfur cluster assembly accessory protein"/>
    <property type="match status" value="1"/>
</dbReference>
<dbReference type="NCBIfam" id="NF010147">
    <property type="entry name" value="PRK13623.1"/>
    <property type="match status" value="1"/>
</dbReference>
<dbReference type="PANTHER" id="PTHR43011">
    <property type="entry name" value="IRON-SULFUR CLUSTER ASSEMBLY 2 HOMOLOG, MITOCHONDRIAL"/>
    <property type="match status" value="1"/>
</dbReference>
<dbReference type="PANTHER" id="PTHR43011:SF1">
    <property type="entry name" value="IRON-SULFUR CLUSTER ASSEMBLY 2 HOMOLOG, MITOCHONDRIAL"/>
    <property type="match status" value="1"/>
</dbReference>
<dbReference type="Pfam" id="PF01521">
    <property type="entry name" value="Fe-S_biosyn"/>
    <property type="match status" value="1"/>
</dbReference>
<dbReference type="SUPFAM" id="SSF89360">
    <property type="entry name" value="HesB-like domain"/>
    <property type="match status" value="1"/>
</dbReference>
<dbReference type="PROSITE" id="PS01152">
    <property type="entry name" value="HESB"/>
    <property type="match status" value="1"/>
</dbReference>
<name>ERPA_BURP1</name>
<proteinExistence type="inferred from homology"/>
<protein>
    <recommendedName>
        <fullName evidence="1">Putative iron-sulfur cluster insertion protein ErpA</fullName>
    </recommendedName>
</protein>
<accession>Q3JNR3</accession>
<sequence length="122" mass="13093">MNAVTESAATTEMPAPFVFTDAAADKVKQLIDEEGNPDLKLRVFVQGGGCSGFQYGFTFDEEVNEDDTVLNKNGVVLLVDAMSYQYLVGAEIDYKDDLNGAQFVIKNPNATTTCGCGSSFSV</sequence>
<feature type="chain" id="PRO_0000311463" description="Putative iron-sulfur cluster insertion protein ErpA">
    <location>
        <begin position="1"/>
        <end position="122"/>
    </location>
</feature>
<feature type="binding site" evidence="1">
    <location>
        <position position="50"/>
    </location>
    <ligand>
        <name>iron-sulfur cluster</name>
        <dbReference type="ChEBI" id="CHEBI:30408"/>
    </ligand>
</feature>
<feature type="binding site" evidence="1">
    <location>
        <position position="114"/>
    </location>
    <ligand>
        <name>iron-sulfur cluster</name>
        <dbReference type="ChEBI" id="CHEBI:30408"/>
    </ligand>
</feature>
<feature type="binding site" evidence="1">
    <location>
        <position position="116"/>
    </location>
    <ligand>
        <name>iron-sulfur cluster</name>
        <dbReference type="ChEBI" id="CHEBI:30408"/>
    </ligand>
</feature>
<reference key="1">
    <citation type="journal article" date="2010" name="Genome Biol. Evol.">
        <title>Continuing evolution of Burkholderia mallei through genome reduction and large-scale rearrangements.</title>
        <authorList>
            <person name="Losada L."/>
            <person name="Ronning C.M."/>
            <person name="DeShazer D."/>
            <person name="Woods D."/>
            <person name="Fedorova N."/>
            <person name="Kim H.S."/>
            <person name="Shabalina S.A."/>
            <person name="Pearson T.R."/>
            <person name="Brinkac L."/>
            <person name="Tan P."/>
            <person name="Nandi T."/>
            <person name="Crabtree J."/>
            <person name="Badger J."/>
            <person name="Beckstrom-Sternberg S."/>
            <person name="Saqib M."/>
            <person name="Schutzer S.E."/>
            <person name="Keim P."/>
            <person name="Nierman W.C."/>
        </authorList>
    </citation>
    <scope>NUCLEOTIDE SEQUENCE [LARGE SCALE GENOMIC DNA]</scope>
    <source>
        <strain>1710b</strain>
    </source>
</reference>
<gene>
    <name evidence="1" type="primary">erpA</name>
    <name type="ordered locus">BURPS1710b_3419</name>
</gene>